<gene>
    <name type="primary">pit</name>
    <name type="synonym">pitA</name>
    <name type="ordered locus">ML2260</name>
</gene>
<sequence>MNINLFLLIIVVITALAFDFTNGFHDTGNAMATSIASGALAPKVAVFFSAILNLVGAFLSTAVAATIAKDLIEADLVTLELVFAGLVGGIVWNLLTWLLGIPSSSSHALIGGIVGARIAAVGGHGVIWSGVISKVIIPAIIAALLAIVVGAVATWLVYAITRSVPAMSTDTRFRRGQIGSASLVSLAHGTNDAQKTMGVIFLALMSYGTVSKTASTPPLWVIVCCAIAIAAGTYLGGWRIIRTLGKGMVEIKPPQGMAAESSSAAVILLSAHFGYALSTTQVCTGSVLGSGLGKPGGEVRWGVAGRMATAWLVTLPLAGSVGAVTYWIVHLIGGYPGAVIGFSLLVAASVAIYIRSRKVKVDHKNVNENWEGSLTAGLDGSDEHKPHSDVGPKLSATLPRYRSSHHTVGVRNAS</sequence>
<organism>
    <name type="scientific">Mycobacterium leprae (strain TN)</name>
    <dbReference type="NCBI Taxonomy" id="272631"/>
    <lineage>
        <taxon>Bacteria</taxon>
        <taxon>Bacillati</taxon>
        <taxon>Actinomycetota</taxon>
        <taxon>Actinomycetes</taxon>
        <taxon>Mycobacteriales</taxon>
        <taxon>Mycobacteriaceae</taxon>
        <taxon>Mycobacterium</taxon>
    </lineage>
</organism>
<name>PIT_MYCLE</name>
<accession>Q50173</accession>
<dbReference type="EMBL" id="U15187">
    <property type="protein sequence ID" value="AAA63139.1"/>
    <property type="molecule type" value="Genomic_DNA"/>
</dbReference>
<dbReference type="EMBL" id="AL583924">
    <property type="protein sequence ID" value="CAC31216.1"/>
    <property type="molecule type" value="Genomic_DNA"/>
</dbReference>
<dbReference type="PIR" id="H87191">
    <property type="entry name" value="H87191"/>
</dbReference>
<dbReference type="RefSeq" id="NP_302471.1">
    <property type="nucleotide sequence ID" value="NC_002677.1"/>
</dbReference>
<dbReference type="RefSeq" id="WP_010908791.1">
    <property type="nucleotide sequence ID" value="NC_002677.1"/>
</dbReference>
<dbReference type="SMR" id="Q50173"/>
<dbReference type="STRING" id="272631.gene:17576119"/>
<dbReference type="KEGG" id="mle:ML2260"/>
<dbReference type="PATRIC" id="fig|272631.5.peg.4315"/>
<dbReference type="Leproma" id="ML2260"/>
<dbReference type="eggNOG" id="COG0306">
    <property type="taxonomic scope" value="Bacteria"/>
</dbReference>
<dbReference type="HOGENOM" id="CLU_015355_1_0_11"/>
<dbReference type="OrthoDB" id="9779554at2"/>
<dbReference type="Proteomes" id="UP000000806">
    <property type="component" value="Chromosome"/>
</dbReference>
<dbReference type="GO" id="GO:0005886">
    <property type="term" value="C:plasma membrane"/>
    <property type="evidence" value="ECO:0007669"/>
    <property type="project" value="UniProtKB-SubCell"/>
</dbReference>
<dbReference type="GO" id="GO:0005315">
    <property type="term" value="F:phosphate transmembrane transporter activity"/>
    <property type="evidence" value="ECO:0007669"/>
    <property type="project" value="InterPro"/>
</dbReference>
<dbReference type="GO" id="GO:0015293">
    <property type="term" value="F:symporter activity"/>
    <property type="evidence" value="ECO:0007669"/>
    <property type="project" value="UniProtKB-KW"/>
</dbReference>
<dbReference type="GO" id="GO:0035435">
    <property type="term" value="P:phosphate ion transmembrane transport"/>
    <property type="evidence" value="ECO:0007669"/>
    <property type="project" value="TreeGrafter"/>
</dbReference>
<dbReference type="InterPro" id="IPR001204">
    <property type="entry name" value="Phos_transporter"/>
</dbReference>
<dbReference type="PANTHER" id="PTHR11101:SF54">
    <property type="entry name" value="LOW-AFFINITY INORGANIC PHOSPHATE TRANSPORTER-RELATED"/>
    <property type="match status" value="1"/>
</dbReference>
<dbReference type="PANTHER" id="PTHR11101">
    <property type="entry name" value="PHOSPHATE TRANSPORTER"/>
    <property type="match status" value="1"/>
</dbReference>
<dbReference type="Pfam" id="PF01384">
    <property type="entry name" value="PHO4"/>
    <property type="match status" value="1"/>
</dbReference>
<feature type="chain" id="PRO_0000080791" description="Probable low-affinity inorganic phosphate transporter">
    <location>
        <begin position="1"/>
        <end position="414"/>
    </location>
</feature>
<feature type="transmembrane region" description="Helical" evidence="2">
    <location>
        <begin position="5"/>
        <end position="25"/>
    </location>
</feature>
<feature type="transmembrane region" description="Helical" evidence="2">
    <location>
        <begin position="44"/>
        <end position="64"/>
    </location>
</feature>
<feature type="transmembrane region" description="Helical" evidence="2">
    <location>
        <begin position="81"/>
        <end position="101"/>
    </location>
</feature>
<feature type="transmembrane region" description="Helical" evidence="2">
    <location>
        <begin position="108"/>
        <end position="128"/>
    </location>
</feature>
<feature type="transmembrane region" description="Helical" evidence="2">
    <location>
        <begin position="135"/>
        <end position="155"/>
    </location>
</feature>
<feature type="transmembrane region" description="Helical" evidence="2">
    <location>
        <begin position="218"/>
        <end position="238"/>
    </location>
</feature>
<feature type="transmembrane region" description="Helical" evidence="2">
    <location>
        <begin position="327"/>
        <end position="347"/>
    </location>
</feature>
<feature type="region of interest" description="Disordered" evidence="3">
    <location>
        <begin position="377"/>
        <end position="396"/>
    </location>
</feature>
<feature type="compositionally biased region" description="Basic and acidic residues" evidence="3">
    <location>
        <begin position="381"/>
        <end position="390"/>
    </location>
</feature>
<keyword id="KW-1003">Cell membrane</keyword>
<keyword id="KW-0472">Membrane</keyword>
<keyword id="KW-0592">Phosphate transport</keyword>
<keyword id="KW-1185">Reference proteome</keyword>
<keyword id="KW-0769">Symport</keyword>
<keyword id="KW-0812">Transmembrane</keyword>
<keyword id="KW-1133">Transmembrane helix</keyword>
<keyword id="KW-0813">Transport</keyword>
<comment type="function">
    <text evidence="1">Low-affinity inorganic phosphate transporter.</text>
</comment>
<comment type="catalytic activity">
    <reaction evidence="1">
        <text>phosphate(in) + H(+)(in) = phosphate(out) + H(+)(out)</text>
        <dbReference type="Rhea" id="RHEA:29939"/>
        <dbReference type="ChEBI" id="CHEBI:15378"/>
        <dbReference type="ChEBI" id="CHEBI:43474"/>
    </reaction>
</comment>
<comment type="subcellular location">
    <subcellularLocation>
        <location evidence="4">Cell membrane</location>
        <topology evidence="2">Multi-pass membrane protein</topology>
    </subcellularLocation>
</comment>
<comment type="similarity">
    <text evidence="4">Belongs to the inorganic phosphate transporter (PiT) (TC 2.A.20) family. Pit subfamily.</text>
</comment>
<evidence type="ECO:0000250" key="1">
    <source>
        <dbReference type="UniProtKB" id="P0AFJ7"/>
    </source>
</evidence>
<evidence type="ECO:0000255" key="2"/>
<evidence type="ECO:0000256" key="3">
    <source>
        <dbReference type="SAM" id="MobiDB-lite"/>
    </source>
</evidence>
<evidence type="ECO:0000305" key="4"/>
<reference key="1">
    <citation type="submission" date="1995-04" db="EMBL/GenBank/DDBJ databases">
        <authorList>
            <person name="Smith D.R."/>
            <person name="Robison K."/>
        </authorList>
    </citation>
    <scope>NUCLEOTIDE SEQUENCE [GENOMIC DNA]</scope>
</reference>
<reference key="2">
    <citation type="journal article" date="2001" name="Nature">
        <title>Massive gene decay in the leprosy bacillus.</title>
        <authorList>
            <person name="Cole S.T."/>
            <person name="Eiglmeier K."/>
            <person name="Parkhill J."/>
            <person name="James K.D."/>
            <person name="Thomson N.R."/>
            <person name="Wheeler P.R."/>
            <person name="Honore N."/>
            <person name="Garnier T."/>
            <person name="Churcher C.M."/>
            <person name="Harris D.E."/>
            <person name="Mungall K.L."/>
            <person name="Basham D."/>
            <person name="Brown D."/>
            <person name="Chillingworth T."/>
            <person name="Connor R."/>
            <person name="Davies R.M."/>
            <person name="Devlin K."/>
            <person name="Duthoy S."/>
            <person name="Feltwell T."/>
            <person name="Fraser A."/>
            <person name="Hamlin N."/>
            <person name="Holroyd S."/>
            <person name="Hornsby T."/>
            <person name="Jagels K."/>
            <person name="Lacroix C."/>
            <person name="Maclean J."/>
            <person name="Moule S."/>
            <person name="Murphy L.D."/>
            <person name="Oliver K."/>
            <person name="Quail M.A."/>
            <person name="Rajandream M.A."/>
            <person name="Rutherford K.M."/>
            <person name="Rutter S."/>
            <person name="Seeger K."/>
            <person name="Simon S."/>
            <person name="Simmonds M."/>
            <person name="Skelton J."/>
            <person name="Squares R."/>
            <person name="Squares S."/>
            <person name="Stevens K."/>
            <person name="Taylor K."/>
            <person name="Whitehead S."/>
            <person name="Woodward J.R."/>
            <person name="Barrell B.G."/>
        </authorList>
    </citation>
    <scope>NUCLEOTIDE SEQUENCE [LARGE SCALE GENOMIC DNA]</scope>
    <source>
        <strain>TN</strain>
    </source>
</reference>
<protein>
    <recommendedName>
        <fullName>Probable low-affinity inorganic phosphate transporter</fullName>
    </recommendedName>
</protein>
<proteinExistence type="inferred from homology"/>